<reference key="1">
    <citation type="journal article" date="2004" name="Mol. Plant Microbe Interact.">
        <title>The genome sequence of the Gram-positive sugarcane pathogen Leifsonia xyli subsp. xyli.</title>
        <authorList>
            <person name="Monteiro-Vitorello C.B."/>
            <person name="Camargo L.E.A."/>
            <person name="Van Sluys M.A."/>
            <person name="Kitajima J.P."/>
            <person name="Truffi D."/>
            <person name="do Amaral A.M."/>
            <person name="Harakava R."/>
            <person name="de Oliveira J.C.F."/>
            <person name="Wood D."/>
            <person name="de Oliveira M.C."/>
            <person name="Miyaki C.Y."/>
            <person name="Takita M.A."/>
            <person name="da Silva A.C.R."/>
            <person name="Furlan L.R."/>
            <person name="Carraro D.M."/>
            <person name="Camarotte G."/>
            <person name="Almeida N.F. Jr."/>
            <person name="Carrer H."/>
            <person name="Coutinho L.L."/>
            <person name="El-Dorry H.A."/>
            <person name="Ferro M.I.T."/>
            <person name="Gagliardi P.R."/>
            <person name="Giglioti E."/>
            <person name="Goldman M.H.S."/>
            <person name="Goldman G.H."/>
            <person name="Kimura E.T."/>
            <person name="Ferro E.S."/>
            <person name="Kuramae E.E."/>
            <person name="Lemos E.G.M."/>
            <person name="Lemos M.V.F."/>
            <person name="Mauro S.M.Z."/>
            <person name="Machado M.A."/>
            <person name="Marino C.L."/>
            <person name="Menck C.F."/>
            <person name="Nunes L.R."/>
            <person name="Oliveira R.C."/>
            <person name="Pereira G.G."/>
            <person name="Siqueira W."/>
            <person name="de Souza A.A."/>
            <person name="Tsai S.M."/>
            <person name="Zanca A.S."/>
            <person name="Simpson A.J.G."/>
            <person name="Brumbley S.M."/>
            <person name="Setubal J.C."/>
        </authorList>
    </citation>
    <scope>NUCLEOTIDE SEQUENCE [LARGE SCALE GENOMIC DNA]</scope>
    <source>
        <strain>CTCB07</strain>
    </source>
</reference>
<name>DCDB_LEIXX</name>
<comment type="function">
    <text evidence="1">Bifunctional enzyme that catalyzes both the deamination of dCTP to dUTP and the hydrolysis of dUTP to dUMP without releasing the toxic dUTP intermediate.</text>
</comment>
<comment type="catalytic activity">
    <reaction evidence="1">
        <text>dCTP + 2 H2O = dUMP + NH4(+) + diphosphate</text>
        <dbReference type="Rhea" id="RHEA:19205"/>
        <dbReference type="ChEBI" id="CHEBI:15377"/>
        <dbReference type="ChEBI" id="CHEBI:28938"/>
        <dbReference type="ChEBI" id="CHEBI:33019"/>
        <dbReference type="ChEBI" id="CHEBI:61481"/>
        <dbReference type="ChEBI" id="CHEBI:246422"/>
        <dbReference type="EC" id="3.5.4.30"/>
    </reaction>
</comment>
<comment type="pathway">
    <text evidence="1">Pyrimidine metabolism; dUMP biosynthesis; dUMP from dCTP: step 1/1.</text>
</comment>
<comment type="subunit">
    <text evidence="1">Homotrimer.</text>
</comment>
<comment type="similarity">
    <text evidence="1">Belongs to the dCTP deaminase family.</text>
</comment>
<proteinExistence type="inferred from homology"/>
<organism>
    <name type="scientific">Leifsonia xyli subsp. xyli (strain CTCB07)</name>
    <dbReference type="NCBI Taxonomy" id="281090"/>
    <lineage>
        <taxon>Bacteria</taxon>
        <taxon>Bacillati</taxon>
        <taxon>Actinomycetota</taxon>
        <taxon>Actinomycetes</taxon>
        <taxon>Micrococcales</taxon>
        <taxon>Microbacteriaceae</taxon>
        <taxon>Leifsonia</taxon>
    </lineage>
</organism>
<sequence length="201" mass="22157">MLLSDRDIKAELTAGRLGLEPFEQGMIQPSSVDVRLDRFFRLFDNHKYPFIDPAEDQPDLTRFVEVVADQPFILHPGEFVLGSTFELVSLPDDVAARLEGKSSLGRLGLLTHSTAGFIDPGFSGHVTLELSNVATLPIKLWPGMKIGQMCFFRLSSAAEKPYGSAEYSSRYQGQRGPTASRSFLNFHRTDVSGTEAGRSSS</sequence>
<keyword id="KW-0378">Hydrolase</keyword>
<keyword id="KW-0546">Nucleotide metabolism</keyword>
<keyword id="KW-0547">Nucleotide-binding</keyword>
<keyword id="KW-1185">Reference proteome</keyword>
<protein>
    <recommendedName>
        <fullName evidence="1">dCTP deaminase, dUMP-forming</fullName>
        <ecNumber evidence="1">3.5.4.30</ecNumber>
    </recommendedName>
    <alternativeName>
        <fullName evidence="1">Bifunctional dCTP deaminase:dUTPase</fullName>
    </alternativeName>
    <alternativeName>
        <fullName evidence="1">DCD-DUT</fullName>
    </alternativeName>
</protein>
<evidence type="ECO:0000255" key="1">
    <source>
        <dbReference type="HAMAP-Rule" id="MF_00146"/>
    </source>
</evidence>
<evidence type="ECO:0000256" key="2">
    <source>
        <dbReference type="SAM" id="MobiDB-lite"/>
    </source>
</evidence>
<accession>Q6AC71</accession>
<feature type="chain" id="PRO_0000155992" description="dCTP deaminase, dUMP-forming">
    <location>
        <begin position="1"/>
        <end position="201"/>
    </location>
</feature>
<feature type="region of interest" description="Disordered" evidence="2">
    <location>
        <begin position="166"/>
        <end position="201"/>
    </location>
</feature>
<feature type="compositionally biased region" description="Polar residues" evidence="2">
    <location>
        <begin position="166"/>
        <end position="183"/>
    </location>
</feature>
<feature type="active site" description="Proton donor/acceptor" evidence="1">
    <location>
        <position position="129"/>
    </location>
</feature>
<feature type="binding site" evidence="1">
    <location>
        <begin position="101"/>
        <end position="106"/>
    </location>
    <ligand>
        <name>dCTP</name>
        <dbReference type="ChEBI" id="CHEBI:61481"/>
    </ligand>
</feature>
<feature type="binding site" evidence="1">
    <location>
        <position position="119"/>
    </location>
    <ligand>
        <name>dCTP</name>
        <dbReference type="ChEBI" id="CHEBI:61481"/>
    </ligand>
</feature>
<feature type="binding site" evidence="1">
    <location>
        <begin position="127"/>
        <end position="129"/>
    </location>
    <ligand>
        <name>dCTP</name>
        <dbReference type="ChEBI" id="CHEBI:61481"/>
    </ligand>
</feature>
<feature type="binding site" evidence="1">
    <location>
        <position position="148"/>
    </location>
    <ligand>
        <name>dCTP</name>
        <dbReference type="ChEBI" id="CHEBI:61481"/>
    </ligand>
</feature>
<feature type="binding site" evidence="1">
    <location>
        <position position="162"/>
    </location>
    <ligand>
        <name>dCTP</name>
        <dbReference type="ChEBI" id="CHEBI:61481"/>
    </ligand>
</feature>
<feature type="binding site" evidence="1">
    <location>
        <position position="174"/>
    </location>
    <ligand>
        <name>dCTP</name>
        <dbReference type="ChEBI" id="CHEBI:61481"/>
    </ligand>
</feature>
<feature type="site" description="Important for bifunctional activity" evidence="1">
    <location>
        <begin position="116"/>
        <end position="117"/>
    </location>
</feature>
<dbReference type="EC" id="3.5.4.30" evidence="1"/>
<dbReference type="EMBL" id="AE016822">
    <property type="protein sequence ID" value="AAT90021.1"/>
    <property type="molecule type" value="Genomic_DNA"/>
</dbReference>
<dbReference type="RefSeq" id="WP_011187000.1">
    <property type="nucleotide sequence ID" value="NC_006087.1"/>
</dbReference>
<dbReference type="SMR" id="Q6AC71"/>
<dbReference type="STRING" id="281090.Lxx23830"/>
<dbReference type="KEGG" id="lxx:Lxx23830"/>
<dbReference type="eggNOG" id="COG0717">
    <property type="taxonomic scope" value="Bacteria"/>
</dbReference>
<dbReference type="HOGENOM" id="CLU_087476_2_0_11"/>
<dbReference type="UniPathway" id="UPA00610">
    <property type="reaction ID" value="UER00667"/>
</dbReference>
<dbReference type="Proteomes" id="UP000001306">
    <property type="component" value="Chromosome"/>
</dbReference>
<dbReference type="GO" id="GO:0033973">
    <property type="term" value="F:dCTP deaminase (dUMP-forming) activity"/>
    <property type="evidence" value="ECO:0007669"/>
    <property type="project" value="UniProtKB-UniRule"/>
</dbReference>
<dbReference type="GO" id="GO:0008829">
    <property type="term" value="F:dCTP deaminase activity"/>
    <property type="evidence" value="ECO:0007669"/>
    <property type="project" value="InterPro"/>
</dbReference>
<dbReference type="GO" id="GO:0000166">
    <property type="term" value="F:nucleotide binding"/>
    <property type="evidence" value="ECO:0007669"/>
    <property type="project" value="UniProtKB-KW"/>
</dbReference>
<dbReference type="GO" id="GO:0006226">
    <property type="term" value="P:dUMP biosynthetic process"/>
    <property type="evidence" value="ECO:0007669"/>
    <property type="project" value="UniProtKB-UniRule"/>
</dbReference>
<dbReference type="GO" id="GO:0006229">
    <property type="term" value="P:dUTP biosynthetic process"/>
    <property type="evidence" value="ECO:0007669"/>
    <property type="project" value="InterPro"/>
</dbReference>
<dbReference type="GO" id="GO:0015949">
    <property type="term" value="P:nucleobase-containing small molecule interconversion"/>
    <property type="evidence" value="ECO:0007669"/>
    <property type="project" value="TreeGrafter"/>
</dbReference>
<dbReference type="CDD" id="cd07557">
    <property type="entry name" value="trimeric_dUTPase"/>
    <property type="match status" value="1"/>
</dbReference>
<dbReference type="FunFam" id="2.70.40.10:FF:000005">
    <property type="entry name" value="dCTP deaminase, dUMP-forming"/>
    <property type="match status" value="1"/>
</dbReference>
<dbReference type="Gene3D" id="2.70.40.10">
    <property type="match status" value="1"/>
</dbReference>
<dbReference type="HAMAP" id="MF_00146">
    <property type="entry name" value="dCTP_deaminase"/>
    <property type="match status" value="1"/>
</dbReference>
<dbReference type="InterPro" id="IPR011962">
    <property type="entry name" value="dCTP_deaminase"/>
</dbReference>
<dbReference type="InterPro" id="IPR036157">
    <property type="entry name" value="dUTPase-like_sf"/>
</dbReference>
<dbReference type="InterPro" id="IPR033704">
    <property type="entry name" value="dUTPase_trimeric"/>
</dbReference>
<dbReference type="NCBIfam" id="TIGR02274">
    <property type="entry name" value="dCTP_deam"/>
    <property type="match status" value="1"/>
</dbReference>
<dbReference type="PANTHER" id="PTHR42680">
    <property type="entry name" value="DCTP DEAMINASE"/>
    <property type="match status" value="1"/>
</dbReference>
<dbReference type="PANTHER" id="PTHR42680:SF3">
    <property type="entry name" value="DCTP DEAMINASE"/>
    <property type="match status" value="1"/>
</dbReference>
<dbReference type="Pfam" id="PF22769">
    <property type="entry name" value="DCD"/>
    <property type="match status" value="1"/>
</dbReference>
<dbReference type="SUPFAM" id="SSF51283">
    <property type="entry name" value="dUTPase-like"/>
    <property type="match status" value="1"/>
</dbReference>
<gene>
    <name evidence="1" type="primary">dcd</name>
    <name type="ordered locus">Lxx23830</name>
</gene>